<proteinExistence type="evidence at transcript level"/>
<reference key="1">
    <citation type="journal article" date="1994" name="Endocrinol. Jpn.">
        <title>Expression and estrogen control of PUMP-1 mRNA in the cat uterus.</title>
        <authorList>
            <person name="Scalzo C.M."/>
            <person name="Verhage H.G."/>
            <person name="Jaffe R.C."/>
        </authorList>
    </citation>
    <scope>NUCLEOTIDE SEQUENCE [MRNA]</scope>
    <source>
        <tissue>Endometrium</tissue>
    </source>
</reference>
<keyword id="KW-0106">Calcium</keyword>
<keyword id="KW-0177">Collagen degradation</keyword>
<keyword id="KW-0272">Extracellular matrix</keyword>
<keyword id="KW-0378">Hydrolase</keyword>
<keyword id="KW-0479">Metal-binding</keyword>
<keyword id="KW-0482">Metalloprotease</keyword>
<keyword id="KW-0645">Protease</keyword>
<keyword id="KW-1185">Reference proteome</keyword>
<keyword id="KW-0964">Secreted</keyword>
<keyword id="KW-0732">Signal</keyword>
<keyword id="KW-0862">Zinc</keyword>
<keyword id="KW-0865">Zymogen</keyword>
<sequence>LCVLCLLPQSPALPLPREAGGHSESQWKQAQEYLKRFYPSDAKSRDADSFGAQLKEMQKFFRLPVTGMLDSRVIVVMQQPRCGLPDTGEDLPSRNRPKWISKVVTYRIISYTRDLPRVTVDHLVAKALNMWSKEIPLSFRRVVLGIPDIVIGFARGAHGDFYPFDGPGGTLAHAYEPGPGLGGDAHFDEDERWADGRGLGINFLAVATHELGHSLGLRHSSDPDSVMYPTYGARDSENFKLSPGDIREIQELYGKRSKSRKK</sequence>
<gene>
    <name type="primary">MMP7</name>
</gene>
<feature type="signal peptide" evidence="1">
    <location>
        <begin position="1" status="less than"/>
        <end position="12"/>
    </location>
</feature>
<feature type="propeptide" id="PRO_0000028736" description="Activation peptide" evidence="1">
    <location>
        <begin position="13"/>
        <end position="89"/>
    </location>
</feature>
<feature type="chain" id="PRO_0000028737" description="Matrilysin">
    <location>
        <begin position="90"/>
        <end position="262"/>
    </location>
</feature>
<feature type="short sequence motif" description="Cysteine switch" evidence="1">
    <location>
        <begin position="80"/>
        <end position="87"/>
    </location>
</feature>
<feature type="active site" evidence="2">
    <location>
        <position position="210"/>
    </location>
</feature>
<feature type="binding site" description="in inhibited form" evidence="1">
    <location>
        <position position="82"/>
    </location>
    <ligand>
        <name>Zn(2+)</name>
        <dbReference type="ChEBI" id="CHEBI:29105"/>
        <label>2</label>
        <note>catalytic</note>
    </ligand>
</feature>
<feature type="binding site" evidence="1">
    <location>
        <position position="148"/>
    </location>
    <ligand>
        <name>Ca(2+)</name>
        <dbReference type="ChEBI" id="CHEBI:29108"/>
        <label>1</label>
    </ligand>
</feature>
<feature type="binding site" evidence="1">
    <location>
        <position position="158"/>
    </location>
    <ligand>
        <name>Zn(2+)</name>
        <dbReference type="ChEBI" id="CHEBI:29105"/>
        <label>1</label>
    </ligand>
</feature>
<feature type="binding site" evidence="1">
    <location>
        <position position="160"/>
    </location>
    <ligand>
        <name>Zn(2+)</name>
        <dbReference type="ChEBI" id="CHEBI:29105"/>
        <label>1</label>
    </ligand>
</feature>
<feature type="binding site" evidence="1">
    <location>
        <position position="165"/>
    </location>
    <ligand>
        <name>Ca(2+)</name>
        <dbReference type="ChEBI" id="CHEBI:29108"/>
        <label>2</label>
    </ligand>
</feature>
<feature type="binding site" evidence="1">
    <location>
        <position position="166"/>
    </location>
    <ligand>
        <name>Ca(2+)</name>
        <dbReference type="ChEBI" id="CHEBI:29108"/>
        <label>2</label>
    </ligand>
</feature>
<feature type="binding site" evidence="1">
    <location>
        <position position="168"/>
    </location>
    <ligand>
        <name>Ca(2+)</name>
        <dbReference type="ChEBI" id="CHEBI:29108"/>
        <label>2</label>
    </ligand>
</feature>
<feature type="binding site" evidence="1">
    <location>
        <position position="170"/>
    </location>
    <ligand>
        <name>Ca(2+)</name>
        <dbReference type="ChEBI" id="CHEBI:29108"/>
        <label>2</label>
    </ligand>
</feature>
<feature type="binding site" evidence="1">
    <location>
        <position position="173"/>
    </location>
    <ligand>
        <name>Zn(2+)</name>
        <dbReference type="ChEBI" id="CHEBI:29105"/>
        <label>1</label>
    </ligand>
</feature>
<feature type="binding site" evidence="1">
    <location>
        <position position="180"/>
    </location>
    <ligand>
        <name>Ca(2+)</name>
        <dbReference type="ChEBI" id="CHEBI:29108"/>
        <label>1</label>
    </ligand>
</feature>
<feature type="binding site" evidence="1">
    <location>
        <position position="182"/>
    </location>
    <ligand>
        <name>Ca(2+)</name>
        <dbReference type="ChEBI" id="CHEBI:29108"/>
        <label>1</label>
    </ligand>
</feature>
<feature type="binding site" evidence="1">
    <location>
        <position position="184"/>
    </location>
    <ligand>
        <name>Ca(2+)</name>
        <dbReference type="ChEBI" id="CHEBI:29108"/>
        <label>1</label>
    </ligand>
</feature>
<feature type="binding site" evidence="1">
    <location>
        <position position="186"/>
    </location>
    <ligand>
        <name>Zn(2+)</name>
        <dbReference type="ChEBI" id="CHEBI:29105"/>
        <label>1</label>
    </ligand>
</feature>
<feature type="binding site" evidence="1">
    <location>
        <position position="188"/>
    </location>
    <ligand>
        <name>Ca(2+)</name>
        <dbReference type="ChEBI" id="CHEBI:29108"/>
        <label>2</label>
    </ligand>
</feature>
<feature type="binding site" evidence="1">
    <location>
        <position position="191"/>
    </location>
    <ligand>
        <name>Ca(2+)</name>
        <dbReference type="ChEBI" id="CHEBI:29108"/>
        <label>2</label>
    </ligand>
</feature>
<feature type="binding site" evidence="1">
    <location>
        <position position="209"/>
    </location>
    <ligand>
        <name>Zn(2+)</name>
        <dbReference type="ChEBI" id="CHEBI:29105"/>
        <label>2</label>
        <note>catalytic</note>
    </ligand>
</feature>
<feature type="binding site" evidence="1">
    <location>
        <position position="213"/>
    </location>
    <ligand>
        <name>Zn(2+)</name>
        <dbReference type="ChEBI" id="CHEBI:29105"/>
        <label>2</label>
        <note>catalytic</note>
    </ligand>
</feature>
<feature type="binding site" evidence="1">
    <location>
        <position position="219"/>
    </location>
    <ligand>
        <name>Zn(2+)</name>
        <dbReference type="ChEBI" id="CHEBI:29105"/>
        <label>2</label>
        <note>catalytic</note>
    </ligand>
</feature>
<feature type="non-terminal residue">
    <location>
        <position position="1"/>
    </location>
</feature>
<evidence type="ECO:0000250" key="1"/>
<evidence type="ECO:0000255" key="2">
    <source>
        <dbReference type="PROSITE-ProRule" id="PRU10095"/>
    </source>
</evidence>
<evidence type="ECO:0000305" key="3"/>
<dbReference type="EC" id="3.4.24.23"/>
<dbReference type="EMBL" id="U04444">
    <property type="protein sequence ID" value="AAA18222.1"/>
    <property type="molecule type" value="mRNA"/>
</dbReference>
<dbReference type="SMR" id="P55032"/>
<dbReference type="STRING" id="9685.ENSFCAP00000014641"/>
<dbReference type="MEROPS" id="M10.008"/>
<dbReference type="PaxDb" id="9685-ENSFCAP00000014641"/>
<dbReference type="eggNOG" id="KOG1565">
    <property type="taxonomic scope" value="Eukaryota"/>
</dbReference>
<dbReference type="HOGENOM" id="CLU_015489_4_1_1"/>
<dbReference type="InParanoid" id="P55032"/>
<dbReference type="TreeFam" id="TF315428"/>
<dbReference type="Proteomes" id="UP000011712">
    <property type="component" value="Unplaced"/>
</dbReference>
<dbReference type="GO" id="GO:0031012">
    <property type="term" value="C:extracellular matrix"/>
    <property type="evidence" value="ECO:0007669"/>
    <property type="project" value="InterPro"/>
</dbReference>
<dbReference type="GO" id="GO:0005615">
    <property type="term" value="C:extracellular space"/>
    <property type="evidence" value="ECO:0000318"/>
    <property type="project" value="GO_Central"/>
</dbReference>
<dbReference type="GO" id="GO:0004175">
    <property type="term" value="F:endopeptidase activity"/>
    <property type="evidence" value="ECO:0000250"/>
    <property type="project" value="UniProtKB"/>
</dbReference>
<dbReference type="GO" id="GO:0004222">
    <property type="term" value="F:metalloendopeptidase activity"/>
    <property type="evidence" value="ECO:0000318"/>
    <property type="project" value="GO_Central"/>
</dbReference>
<dbReference type="GO" id="GO:0008270">
    <property type="term" value="F:zinc ion binding"/>
    <property type="evidence" value="ECO:0007669"/>
    <property type="project" value="InterPro"/>
</dbReference>
<dbReference type="GO" id="GO:0030574">
    <property type="term" value="P:collagen catabolic process"/>
    <property type="evidence" value="ECO:0000318"/>
    <property type="project" value="GO_Central"/>
</dbReference>
<dbReference type="GO" id="GO:0030198">
    <property type="term" value="P:extracellular matrix organization"/>
    <property type="evidence" value="ECO:0000318"/>
    <property type="project" value="GO_Central"/>
</dbReference>
<dbReference type="GO" id="GO:0006508">
    <property type="term" value="P:proteolysis"/>
    <property type="evidence" value="ECO:0007669"/>
    <property type="project" value="UniProtKB-KW"/>
</dbReference>
<dbReference type="CDD" id="cd04278">
    <property type="entry name" value="ZnMc_MMP"/>
    <property type="match status" value="1"/>
</dbReference>
<dbReference type="FunFam" id="3.40.390.10:FF:000007">
    <property type="entry name" value="Collagenase 3"/>
    <property type="match status" value="1"/>
</dbReference>
<dbReference type="Gene3D" id="3.40.390.10">
    <property type="entry name" value="Collagenase (Catalytic Domain)"/>
    <property type="match status" value="1"/>
</dbReference>
<dbReference type="InterPro" id="IPR033739">
    <property type="entry name" value="M10A_MMP"/>
</dbReference>
<dbReference type="InterPro" id="IPR024079">
    <property type="entry name" value="MetalloPept_cat_dom_sf"/>
</dbReference>
<dbReference type="InterPro" id="IPR001818">
    <property type="entry name" value="Pept_M10_metallopeptidase"/>
</dbReference>
<dbReference type="InterPro" id="IPR021190">
    <property type="entry name" value="Pept_M10A"/>
</dbReference>
<dbReference type="InterPro" id="IPR006026">
    <property type="entry name" value="Peptidase_Metallo"/>
</dbReference>
<dbReference type="InterPro" id="IPR002477">
    <property type="entry name" value="Peptidoglycan-bd-like"/>
</dbReference>
<dbReference type="InterPro" id="IPR036365">
    <property type="entry name" value="PGBD-like_sf"/>
</dbReference>
<dbReference type="PANTHER" id="PTHR10201:SF143">
    <property type="entry name" value="MATRILYSIN"/>
    <property type="match status" value="1"/>
</dbReference>
<dbReference type="PANTHER" id="PTHR10201">
    <property type="entry name" value="MATRIX METALLOPROTEINASE"/>
    <property type="match status" value="1"/>
</dbReference>
<dbReference type="Pfam" id="PF00413">
    <property type="entry name" value="Peptidase_M10"/>
    <property type="match status" value="1"/>
</dbReference>
<dbReference type="Pfam" id="PF01471">
    <property type="entry name" value="PG_binding_1"/>
    <property type="match status" value="1"/>
</dbReference>
<dbReference type="PRINTS" id="PR00138">
    <property type="entry name" value="MATRIXIN"/>
</dbReference>
<dbReference type="SMART" id="SM00235">
    <property type="entry name" value="ZnMc"/>
    <property type="match status" value="1"/>
</dbReference>
<dbReference type="SUPFAM" id="SSF55486">
    <property type="entry name" value="Metalloproteases ('zincins'), catalytic domain"/>
    <property type="match status" value="1"/>
</dbReference>
<dbReference type="SUPFAM" id="SSF47090">
    <property type="entry name" value="PGBD-like"/>
    <property type="match status" value="1"/>
</dbReference>
<dbReference type="PROSITE" id="PS00142">
    <property type="entry name" value="ZINC_PROTEASE"/>
    <property type="match status" value="1"/>
</dbReference>
<name>MMP7_FELCA</name>
<organism>
    <name type="scientific">Felis catus</name>
    <name type="common">Cat</name>
    <name type="synonym">Felis silvestris catus</name>
    <dbReference type="NCBI Taxonomy" id="9685"/>
    <lineage>
        <taxon>Eukaryota</taxon>
        <taxon>Metazoa</taxon>
        <taxon>Chordata</taxon>
        <taxon>Craniata</taxon>
        <taxon>Vertebrata</taxon>
        <taxon>Euteleostomi</taxon>
        <taxon>Mammalia</taxon>
        <taxon>Eutheria</taxon>
        <taxon>Laurasiatheria</taxon>
        <taxon>Carnivora</taxon>
        <taxon>Feliformia</taxon>
        <taxon>Felidae</taxon>
        <taxon>Felinae</taxon>
        <taxon>Felis</taxon>
    </lineage>
</organism>
<protein>
    <recommendedName>
        <fullName>Matrilysin</fullName>
        <ecNumber>3.4.24.23</ecNumber>
    </recommendedName>
    <alternativeName>
        <fullName>Matrin</fullName>
    </alternativeName>
    <alternativeName>
        <fullName>Matrix metalloproteinase-7</fullName>
        <shortName>MMP-7</shortName>
    </alternativeName>
    <alternativeName>
        <fullName>Pump-1 protease</fullName>
    </alternativeName>
    <alternativeName>
        <fullName>Uterine metalloproteinase</fullName>
    </alternativeName>
</protein>
<accession>P55032</accession>
<comment type="function">
    <text>Degrades casein, gelatins of types I, III, IV, and V, and fibronectin. Activates procollagenase.</text>
</comment>
<comment type="catalytic activity">
    <reaction>
        <text>Cleavage of 14-Ala-|-Leu-15 and 16-Tyr-|-Leu-17 in B chain of insulin. No action on collagen types I, II, IV, V. Cleaves gelatin chain alpha2(I) &gt; alpha1(I).</text>
        <dbReference type="EC" id="3.4.24.23"/>
    </reaction>
</comment>
<comment type="cofactor">
    <cofactor evidence="1">
        <name>Ca(2+)</name>
        <dbReference type="ChEBI" id="CHEBI:29108"/>
    </cofactor>
    <text evidence="1">Binds 2 calcium ions per subunit.</text>
</comment>
<comment type="cofactor">
    <cofactor evidence="1">
        <name>Zn(2+)</name>
        <dbReference type="ChEBI" id="CHEBI:29105"/>
    </cofactor>
    <text evidence="1">Binds 2 Zn(2+) ions per subunit.</text>
</comment>
<comment type="subcellular location">
    <subcellularLocation>
        <location evidence="3">Secreted</location>
        <location evidence="3">Extracellular space</location>
        <location evidence="3">Extracellular matrix</location>
    </subcellularLocation>
</comment>
<comment type="domain">
    <text>The conserved cysteine present in the cysteine-switch motif binds the catalytic zinc ion, thus inhibiting the enzyme. The dissociation of the cysteine from the zinc ion upon the activation-peptide release activates the enzyme.</text>
</comment>
<comment type="similarity">
    <text evidence="3">Belongs to the peptidase M10A family.</text>
</comment>